<organism>
    <name type="scientific">Aspergillus parasiticus</name>
    <dbReference type="NCBI Taxonomy" id="5067"/>
    <lineage>
        <taxon>Eukaryota</taxon>
        <taxon>Fungi</taxon>
        <taxon>Dikarya</taxon>
        <taxon>Ascomycota</taxon>
        <taxon>Pezizomycotina</taxon>
        <taxon>Eurotiomycetes</taxon>
        <taxon>Eurotiomycetidae</taxon>
        <taxon>Eurotiales</taxon>
        <taxon>Aspergillaceae</taxon>
        <taxon>Aspergillus</taxon>
        <taxon>Aspergillus subgen. Circumdati</taxon>
    </lineage>
</organism>
<dbReference type="EMBL" id="L49386">
    <property type="protein sequence ID" value="AAB41258.1"/>
    <property type="molecule type" value="Genomic_DNA"/>
</dbReference>
<dbReference type="PIR" id="JC5472">
    <property type="entry name" value="JC5472"/>
</dbReference>
<dbReference type="SMR" id="Q00264"/>
<dbReference type="VEuPathDB" id="FungiDB:BDV34DRAFT_154242"/>
<dbReference type="GO" id="GO:0005737">
    <property type="term" value="C:cytoplasm"/>
    <property type="evidence" value="ECO:0007669"/>
    <property type="project" value="UniProtKB-KW"/>
</dbReference>
<dbReference type="GO" id="GO:0005874">
    <property type="term" value="C:microtubule"/>
    <property type="evidence" value="ECO:0007669"/>
    <property type="project" value="UniProtKB-KW"/>
</dbReference>
<dbReference type="GO" id="GO:0005525">
    <property type="term" value="F:GTP binding"/>
    <property type="evidence" value="ECO:0007669"/>
    <property type="project" value="UniProtKB-KW"/>
</dbReference>
<dbReference type="GO" id="GO:0003924">
    <property type="term" value="F:GTPase activity"/>
    <property type="evidence" value="ECO:0007669"/>
    <property type="project" value="InterPro"/>
</dbReference>
<dbReference type="GO" id="GO:0046872">
    <property type="term" value="F:metal ion binding"/>
    <property type="evidence" value="ECO:0007669"/>
    <property type="project" value="UniProtKB-KW"/>
</dbReference>
<dbReference type="GO" id="GO:0005200">
    <property type="term" value="F:structural constituent of cytoskeleton"/>
    <property type="evidence" value="ECO:0007669"/>
    <property type="project" value="InterPro"/>
</dbReference>
<dbReference type="GO" id="GO:0007017">
    <property type="term" value="P:microtubule-based process"/>
    <property type="evidence" value="ECO:0007669"/>
    <property type="project" value="InterPro"/>
</dbReference>
<dbReference type="CDD" id="cd02187">
    <property type="entry name" value="beta_tubulin"/>
    <property type="match status" value="1"/>
</dbReference>
<dbReference type="FunFam" id="1.10.287.600:FF:000003">
    <property type="entry name" value="Tubulin beta chain"/>
    <property type="match status" value="1"/>
</dbReference>
<dbReference type="FunFam" id="3.30.1330.20:FF:000002">
    <property type="entry name" value="Tubulin beta chain"/>
    <property type="match status" value="1"/>
</dbReference>
<dbReference type="FunFam" id="3.40.50.1440:FF:000009">
    <property type="entry name" value="Tubulin beta chain"/>
    <property type="match status" value="1"/>
</dbReference>
<dbReference type="Gene3D" id="1.10.287.600">
    <property type="entry name" value="Helix hairpin bin"/>
    <property type="match status" value="1"/>
</dbReference>
<dbReference type="Gene3D" id="3.30.1330.20">
    <property type="entry name" value="Tubulin/FtsZ, C-terminal domain"/>
    <property type="match status" value="1"/>
</dbReference>
<dbReference type="Gene3D" id="3.40.50.1440">
    <property type="entry name" value="Tubulin/FtsZ, GTPase domain"/>
    <property type="match status" value="1"/>
</dbReference>
<dbReference type="InterPro" id="IPR013838">
    <property type="entry name" value="Beta-tubulin_BS"/>
</dbReference>
<dbReference type="InterPro" id="IPR002453">
    <property type="entry name" value="Beta_tubulin"/>
</dbReference>
<dbReference type="InterPro" id="IPR008280">
    <property type="entry name" value="Tub_FtsZ_C"/>
</dbReference>
<dbReference type="InterPro" id="IPR000217">
    <property type="entry name" value="Tubulin"/>
</dbReference>
<dbReference type="InterPro" id="IPR037103">
    <property type="entry name" value="Tubulin/FtsZ-like_C"/>
</dbReference>
<dbReference type="InterPro" id="IPR018316">
    <property type="entry name" value="Tubulin/FtsZ_2-layer-sand-dom"/>
</dbReference>
<dbReference type="InterPro" id="IPR036525">
    <property type="entry name" value="Tubulin/FtsZ_GTPase_sf"/>
</dbReference>
<dbReference type="InterPro" id="IPR023123">
    <property type="entry name" value="Tubulin_C"/>
</dbReference>
<dbReference type="InterPro" id="IPR017975">
    <property type="entry name" value="Tubulin_CS"/>
</dbReference>
<dbReference type="InterPro" id="IPR003008">
    <property type="entry name" value="Tubulin_FtsZ_GTPase"/>
</dbReference>
<dbReference type="PANTHER" id="PTHR11588">
    <property type="entry name" value="TUBULIN"/>
    <property type="match status" value="1"/>
</dbReference>
<dbReference type="Pfam" id="PF00091">
    <property type="entry name" value="Tubulin"/>
    <property type="match status" value="1"/>
</dbReference>
<dbReference type="Pfam" id="PF03953">
    <property type="entry name" value="Tubulin_C"/>
    <property type="match status" value="1"/>
</dbReference>
<dbReference type="PRINTS" id="PR01163">
    <property type="entry name" value="BETATUBULIN"/>
</dbReference>
<dbReference type="PRINTS" id="PR01161">
    <property type="entry name" value="TUBULIN"/>
</dbReference>
<dbReference type="SMART" id="SM00864">
    <property type="entry name" value="Tubulin"/>
    <property type="match status" value="1"/>
</dbReference>
<dbReference type="SMART" id="SM00865">
    <property type="entry name" value="Tubulin_C"/>
    <property type="match status" value="1"/>
</dbReference>
<dbReference type="SUPFAM" id="SSF55307">
    <property type="entry name" value="Tubulin C-terminal domain-like"/>
    <property type="match status" value="1"/>
</dbReference>
<dbReference type="SUPFAM" id="SSF52490">
    <property type="entry name" value="Tubulin nucleotide-binding domain-like"/>
    <property type="match status" value="1"/>
</dbReference>
<dbReference type="PROSITE" id="PS00227">
    <property type="entry name" value="TUBULIN"/>
    <property type="match status" value="1"/>
</dbReference>
<dbReference type="PROSITE" id="PS00228">
    <property type="entry name" value="TUBULIN_B_AUTOREG"/>
    <property type="match status" value="1"/>
</dbReference>
<accession>Q00264</accession>
<sequence>MREIVYLQTGQCGNQIGAAFWQTISGEHGLDGSGVYNGSSDLQLERMNVYFNEASGNKYVPRAVLVDLEPGTMDAVRAGPFGQLFRPDNFVFGQSGAGNNWAKGHYTEGAELVDQVVDVVRREAEGCDCLQGFQITHSLGGGTGAGMGTLLISKIREEFPDRMMATFSVMPSPKVSDTVVEPYNATLSVHQLVEHSDETFCIDNEALYDICMRTLKLSNPSYGDLNHLVSAVMSGVTTCLRFPGQLNSDLRKLAVNMVPFPRLHFFMVGFAPLTSRGAHSFRAVSVPELTQQMFDPKNMMAASDFRNGRYLTCSAIFRGKVSMKEVEDQMRNIQSKNQTYFVEWIPNNIQTALCSIPPRGLKMSSTFIGNSTSIQELFKRVGDQFTAMFRRKAFLHWYTGEGMDEMEFTEAESNMNDLVSEYQQYQDASISEGEEEYLEEEEPLEHEE</sequence>
<protein>
    <recommendedName>
        <fullName>Tubulin beta chain</fullName>
    </recommendedName>
    <alternativeName>
        <fullName>Beta-tubulin</fullName>
    </alternativeName>
</protein>
<keyword id="KW-0963">Cytoplasm</keyword>
<keyword id="KW-0206">Cytoskeleton</keyword>
<keyword id="KW-0342">GTP-binding</keyword>
<keyword id="KW-0460">Magnesium</keyword>
<keyword id="KW-0479">Metal-binding</keyword>
<keyword id="KW-0493">Microtubule</keyword>
<keyword id="KW-0547">Nucleotide-binding</keyword>
<gene>
    <name type="primary">benR</name>
</gene>
<comment type="function">
    <text>Tubulin is the major constituent of microtubules, a cylinder consisting of laterally associated linear protofilaments composed of alpha- and beta-tubulin heterodimers. Microtubules grow by the addition of GTP-tubulin dimers to the microtubule end, where a stabilizing cap forms. Below the cap, tubulin dimers are in GDP-bound state, owing to GTPase activity of alpha-tubulin.</text>
</comment>
<comment type="cofactor">
    <cofactor evidence="1">
        <name>Mg(2+)</name>
        <dbReference type="ChEBI" id="CHEBI:18420"/>
    </cofactor>
</comment>
<comment type="subunit">
    <text>Dimer of alpha and beta chains. A typical microtubule is a hollow water-filled tube with an outer diameter of 25 nm and an inner diameter of 15 nM. Alpha-beta heterodimers associate head-to-tail to form protofilaments running lengthwise along the microtubule wall with the beta-tubulin subunit facing the microtubule plus end conferring a structural polarity. Microtubules usually have 13 protofilaments but different protofilament numbers can be found in some organisms and specialized cells.</text>
</comment>
<comment type="subcellular location">
    <subcellularLocation>
        <location>Cytoplasm</location>
        <location>Cytoskeleton</location>
    </subcellularLocation>
</comment>
<comment type="similarity">
    <text evidence="4">Belongs to the tubulin family.</text>
</comment>
<name>TBB_ASPPA</name>
<reference key="1">
    <citation type="journal article" date="1996" name="Gene">
        <title>Cloning and functional analysis of a beta-tubulin gene from a benomyl resistant mutant of Aspergillus parasiticus.</title>
        <authorList>
            <person name="Wu T.S."/>
            <person name="Skory C.D."/>
            <person name="Horng J.S."/>
            <person name="Linz J.E."/>
        </authorList>
    </citation>
    <scope>NUCLEOTIDE SEQUENCE [GENOMIC DNA]</scope>
</reference>
<feature type="chain" id="PRO_0000048395" description="Tubulin beta chain">
    <location>
        <begin position="1"/>
        <end position="448"/>
    </location>
</feature>
<feature type="region of interest" description="Disordered" evidence="3">
    <location>
        <begin position="425"/>
        <end position="448"/>
    </location>
</feature>
<feature type="compositionally biased region" description="Acidic residues" evidence="3">
    <location>
        <begin position="432"/>
        <end position="448"/>
    </location>
</feature>
<feature type="binding site" evidence="2">
    <location>
        <position position="11"/>
    </location>
    <ligand>
        <name>GTP</name>
        <dbReference type="ChEBI" id="CHEBI:37565"/>
    </ligand>
</feature>
<feature type="binding site" evidence="1">
    <location>
        <position position="69"/>
    </location>
    <ligand>
        <name>GTP</name>
        <dbReference type="ChEBI" id="CHEBI:37565"/>
    </ligand>
</feature>
<feature type="binding site" evidence="1">
    <location>
        <position position="69"/>
    </location>
    <ligand>
        <name>Mg(2+)</name>
        <dbReference type="ChEBI" id="CHEBI:18420"/>
    </ligand>
</feature>
<feature type="binding site" evidence="2">
    <location>
        <position position="138"/>
    </location>
    <ligand>
        <name>GTP</name>
        <dbReference type="ChEBI" id="CHEBI:37565"/>
    </ligand>
</feature>
<feature type="binding site" evidence="2">
    <location>
        <position position="142"/>
    </location>
    <ligand>
        <name>GTP</name>
        <dbReference type="ChEBI" id="CHEBI:37565"/>
    </ligand>
</feature>
<feature type="binding site" evidence="2">
    <location>
        <position position="143"/>
    </location>
    <ligand>
        <name>GTP</name>
        <dbReference type="ChEBI" id="CHEBI:37565"/>
    </ligand>
</feature>
<feature type="binding site" evidence="2">
    <location>
        <position position="144"/>
    </location>
    <ligand>
        <name>GTP</name>
        <dbReference type="ChEBI" id="CHEBI:37565"/>
    </ligand>
</feature>
<feature type="binding site" evidence="2">
    <location>
        <position position="204"/>
    </location>
    <ligand>
        <name>GTP</name>
        <dbReference type="ChEBI" id="CHEBI:37565"/>
    </ligand>
</feature>
<feature type="binding site" evidence="2">
    <location>
        <position position="226"/>
    </location>
    <ligand>
        <name>GTP</name>
        <dbReference type="ChEBI" id="CHEBI:37565"/>
    </ligand>
</feature>
<proteinExistence type="inferred from homology"/>
<evidence type="ECO:0000250" key="1">
    <source>
        <dbReference type="UniProtKB" id="P68363"/>
    </source>
</evidence>
<evidence type="ECO:0000250" key="2">
    <source>
        <dbReference type="UniProtKB" id="Q13509"/>
    </source>
</evidence>
<evidence type="ECO:0000256" key="3">
    <source>
        <dbReference type="SAM" id="MobiDB-lite"/>
    </source>
</evidence>
<evidence type="ECO:0000305" key="4"/>